<accession>P46899</accession>
<accession>P70969</accession>
<gene>
    <name evidence="1" type="primary">rplR</name>
    <name type="ordered locus">BSU01320</name>
</gene>
<sequence>MITKTSKNAARLKRHARVRAKLSGTAERPRLNVFRSNKHIYAQIIDDVNGVTLASASTLDKDLNVESTGDTSAATKVGELVAKRAAEKGISDVVFDRGGYLYHGRVKALADAAREAGLKF</sequence>
<protein>
    <recommendedName>
        <fullName evidence="1">Large ribosomal subunit protein uL18</fullName>
    </recommendedName>
    <alternativeName>
        <fullName evidence="4">50S ribosomal protein L18</fullName>
    </alternativeName>
    <alternativeName>
        <fullName>BL16</fullName>
    </alternativeName>
</protein>
<reference key="1">
    <citation type="journal article" date="1996" name="Gene">
        <title>Genetic and transcriptional organization of the Bacillus subtilis spc-alpha region.</title>
        <authorList>
            <person name="Suh J.-W."/>
            <person name="Boylan S.A."/>
            <person name="Oh S.H."/>
            <person name="Price C.W."/>
        </authorList>
    </citation>
    <scope>NUCLEOTIDE SEQUENCE [GENOMIC DNA]</scope>
    <source>
        <strain>168 / Marburg / ATCC 6051 / DSM 10 / JCM 1465 / NBRC 13719 / NCIMB 3610 / NRRL NRS-744 / VKM B-501</strain>
    </source>
</reference>
<reference key="2">
    <citation type="journal article" date="1996" name="Microbiology">
        <title>Sequence analysis of a 50 kb region between spo0H and rrnH on the Bacillus subtilis chromosome.</title>
        <authorList>
            <person name="Yasumoto K."/>
            <person name="Liu H."/>
            <person name="Jeong S.M."/>
            <person name="Ohashi Y."/>
            <person name="Kakinuma S."/>
            <person name="Tanaka K."/>
            <person name="Kawamura F."/>
            <person name="Yoshikawa H."/>
            <person name="Takahashi H."/>
        </authorList>
    </citation>
    <scope>NUCLEOTIDE SEQUENCE [GENOMIC DNA]</scope>
    <source>
        <strain>168</strain>
    </source>
</reference>
<reference key="3">
    <citation type="journal article" date="1997" name="Nature">
        <title>The complete genome sequence of the Gram-positive bacterium Bacillus subtilis.</title>
        <authorList>
            <person name="Kunst F."/>
            <person name="Ogasawara N."/>
            <person name="Moszer I."/>
            <person name="Albertini A.M."/>
            <person name="Alloni G."/>
            <person name="Azevedo V."/>
            <person name="Bertero M.G."/>
            <person name="Bessieres P."/>
            <person name="Bolotin A."/>
            <person name="Borchert S."/>
            <person name="Borriss R."/>
            <person name="Boursier L."/>
            <person name="Brans A."/>
            <person name="Braun M."/>
            <person name="Brignell S.C."/>
            <person name="Bron S."/>
            <person name="Brouillet S."/>
            <person name="Bruschi C.V."/>
            <person name="Caldwell B."/>
            <person name="Capuano V."/>
            <person name="Carter N.M."/>
            <person name="Choi S.-K."/>
            <person name="Codani J.-J."/>
            <person name="Connerton I.F."/>
            <person name="Cummings N.J."/>
            <person name="Daniel R.A."/>
            <person name="Denizot F."/>
            <person name="Devine K.M."/>
            <person name="Duesterhoeft A."/>
            <person name="Ehrlich S.D."/>
            <person name="Emmerson P.T."/>
            <person name="Entian K.-D."/>
            <person name="Errington J."/>
            <person name="Fabret C."/>
            <person name="Ferrari E."/>
            <person name="Foulger D."/>
            <person name="Fritz C."/>
            <person name="Fujita M."/>
            <person name="Fujita Y."/>
            <person name="Fuma S."/>
            <person name="Galizzi A."/>
            <person name="Galleron N."/>
            <person name="Ghim S.-Y."/>
            <person name="Glaser P."/>
            <person name="Goffeau A."/>
            <person name="Golightly E.J."/>
            <person name="Grandi G."/>
            <person name="Guiseppi G."/>
            <person name="Guy B.J."/>
            <person name="Haga K."/>
            <person name="Haiech J."/>
            <person name="Harwood C.R."/>
            <person name="Henaut A."/>
            <person name="Hilbert H."/>
            <person name="Holsappel S."/>
            <person name="Hosono S."/>
            <person name="Hullo M.-F."/>
            <person name="Itaya M."/>
            <person name="Jones L.-M."/>
            <person name="Joris B."/>
            <person name="Karamata D."/>
            <person name="Kasahara Y."/>
            <person name="Klaerr-Blanchard M."/>
            <person name="Klein C."/>
            <person name="Kobayashi Y."/>
            <person name="Koetter P."/>
            <person name="Koningstein G."/>
            <person name="Krogh S."/>
            <person name="Kumano M."/>
            <person name="Kurita K."/>
            <person name="Lapidus A."/>
            <person name="Lardinois S."/>
            <person name="Lauber J."/>
            <person name="Lazarevic V."/>
            <person name="Lee S.-M."/>
            <person name="Levine A."/>
            <person name="Liu H."/>
            <person name="Masuda S."/>
            <person name="Mauel C."/>
            <person name="Medigue C."/>
            <person name="Medina N."/>
            <person name="Mellado R.P."/>
            <person name="Mizuno M."/>
            <person name="Moestl D."/>
            <person name="Nakai S."/>
            <person name="Noback M."/>
            <person name="Noone D."/>
            <person name="O'Reilly M."/>
            <person name="Ogawa K."/>
            <person name="Ogiwara A."/>
            <person name="Oudega B."/>
            <person name="Park S.-H."/>
            <person name="Parro V."/>
            <person name="Pohl T.M."/>
            <person name="Portetelle D."/>
            <person name="Porwollik S."/>
            <person name="Prescott A.M."/>
            <person name="Presecan E."/>
            <person name="Pujic P."/>
            <person name="Purnelle B."/>
            <person name="Rapoport G."/>
            <person name="Rey M."/>
            <person name="Reynolds S."/>
            <person name="Rieger M."/>
            <person name="Rivolta C."/>
            <person name="Rocha E."/>
            <person name="Roche B."/>
            <person name="Rose M."/>
            <person name="Sadaie Y."/>
            <person name="Sato T."/>
            <person name="Scanlan E."/>
            <person name="Schleich S."/>
            <person name="Schroeter R."/>
            <person name="Scoffone F."/>
            <person name="Sekiguchi J."/>
            <person name="Sekowska A."/>
            <person name="Seror S.J."/>
            <person name="Serror P."/>
            <person name="Shin B.-S."/>
            <person name="Soldo B."/>
            <person name="Sorokin A."/>
            <person name="Tacconi E."/>
            <person name="Takagi T."/>
            <person name="Takahashi H."/>
            <person name="Takemaru K."/>
            <person name="Takeuchi M."/>
            <person name="Tamakoshi A."/>
            <person name="Tanaka T."/>
            <person name="Terpstra P."/>
            <person name="Tognoni A."/>
            <person name="Tosato V."/>
            <person name="Uchiyama S."/>
            <person name="Vandenbol M."/>
            <person name="Vannier F."/>
            <person name="Vassarotti A."/>
            <person name="Viari A."/>
            <person name="Wambutt R."/>
            <person name="Wedler E."/>
            <person name="Wedler H."/>
            <person name="Weitzenegger T."/>
            <person name="Winters P."/>
            <person name="Wipat A."/>
            <person name="Yamamoto H."/>
            <person name="Yamane K."/>
            <person name="Yasumoto K."/>
            <person name="Yata K."/>
            <person name="Yoshida K."/>
            <person name="Yoshikawa H.-F."/>
            <person name="Zumstein E."/>
            <person name="Yoshikawa H."/>
            <person name="Danchin A."/>
        </authorList>
    </citation>
    <scope>NUCLEOTIDE SEQUENCE [LARGE SCALE GENOMIC DNA]</scope>
    <source>
        <strain>168</strain>
    </source>
</reference>
<reference key="4">
    <citation type="journal article" date="2009" name="Microbiology">
        <title>From a consortium sequence to a unified sequence: the Bacillus subtilis 168 reference genome a decade later.</title>
        <authorList>
            <person name="Barbe V."/>
            <person name="Cruveiller S."/>
            <person name="Kunst F."/>
            <person name="Lenoble P."/>
            <person name="Meurice G."/>
            <person name="Sekowska A."/>
            <person name="Vallenet D."/>
            <person name="Wang T."/>
            <person name="Moszer I."/>
            <person name="Medigue C."/>
            <person name="Danchin A."/>
        </authorList>
    </citation>
    <scope>SEQUENCE REVISION TO 37</scope>
</reference>
<reference key="5">
    <citation type="journal article" date="1984" name="J. Biol. Chem.">
        <title>The ribonucleoprotein substrate for a ribosomal RNA-processing nuclease.</title>
        <authorList>
            <person name="Stahl D.A."/>
            <person name="Pace B."/>
            <person name="Marsh T."/>
            <person name="Pace N.R."/>
        </authorList>
    </citation>
    <scope>FUNCTION IN RNASE M5 CLEAVAGE</scope>
    <scope>RRNA-BINDING</scope>
    <scope>SUBUNIT</scope>
</reference>
<reference evidence="6 7" key="6">
    <citation type="journal article" date="2018" name="Proc. Natl. Acad. Sci. U.S.A.">
        <title>Structural basis for antibiotic resistance mediated by the Bacillus subtilis ABCF ATPase VmlR.</title>
        <authorList>
            <person name="Crowe-McAuliffe C."/>
            <person name="Graf M."/>
            <person name="Huter P."/>
            <person name="Takada H."/>
            <person name="Abdelshahid M."/>
            <person name="Novacek J."/>
            <person name="Murina V."/>
            <person name="Atkinson G.C."/>
            <person name="Hauryliuk V."/>
            <person name="Wilson D.N."/>
        </authorList>
    </citation>
    <scope>STRUCTURE BY ELECTRON MICROSCOPY (3.10 ANGSTROMS) OF 1-120 WITH AND WITHOUT VIRGINIAMYCIN M</scope>
</reference>
<proteinExistence type="evidence at protein level"/>
<dbReference type="EMBL" id="L47971">
    <property type="protein sequence ID" value="AAB06815.1"/>
    <property type="molecule type" value="Genomic_DNA"/>
</dbReference>
<dbReference type="EMBL" id="D64125">
    <property type="protein sequence ID" value="BAA10982.1"/>
    <property type="molecule type" value="Genomic_DNA"/>
</dbReference>
<dbReference type="EMBL" id="AL009126">
    <property type="protein sequence ID" value="CAB11908.2"/>
    <property type="molecule type" value="Genomic_DNA"/>
</dbReference>
<dbReference type="PIR" id="D69696">
    <property type="entry name" value="D69696"/>
</dbReference>
<dbReference type="RefSeq" id="NP_388013.2">
    <property type="nucleotide sequence ID" value="NC_000964.3"/>
</dbReference>
<dbReference type="RefSeq" id="WP_003225816.1">
    <property type="nucleotide sequence ID" value="NZ_OZ025638.1"/>
</dbReference>
<dbReference type="PDB" id="3J3V">
    <property type="method" value="EM"/>
    <property type="resolution" value="13.30 A"/>
    <property type="chains" value="O=1-120"/>
</dbReference>
<dbReference type="PDB" id="3J9W">
    <property type="method" value="EM"/>
    <property type="resolution" value="3.90 A"/>
    <property type="chains" value="BR=1-120"/>
</dbReference>
<dbReference type="PDB" id="5NJT">
    <property type="method" value="EM"/>
    <property type="resolution" value="3.80 A"/>
    <property type="chains" value="h=1-120"/>
</dbReference>
<dbReference type="PDB" id="6HA1">
    <property type="method" value="EM"/>
    <property type="resolution" value="3.10 A"/>
    <property type="chains" value="O=1-120"/>
</dbReference>
<dbReference type="PDB" id="6HA8">
    <property type="method" value="EM"/>
    <property type="resolution" value="3.50 A"/>
    <property type="chains" value="O=1-120"/>
</dbReference>
<dbReference type="PDB" id="6HTQ">
    <property type="method" value="EM"/>
    <property type="resolution" value="4.50 A"/>
    <property type="chains" value="O=1-120"/>
</dbReference>
<dbReference type="PDB" id="6PPF">
    <property type="method" value="EM"/>
    <property type="resolution" value="3.40 A"/>
    <property type="chains" value="O=1-120"/>
</dbReference>
<dbReference type="PDB" id="6PPK">
    <property type="method" value="EM"/>
    <property type="resolution" value="4.40 A"/>
    <property type="chains" value="O=1-120"/>
</dbReference>
<dbReference type="PDB" id="6TNN">
    <property type="method" value="EM"/>
    <property type="resolution" value="3.07 A"/>
    <property type="chains" value="h=1-120"/>
</dbReference>
<dbReference type="PDB" id="6TPQ">
    <property type="method" value="EM"/>
    <property type="resolution" value="3.07 A"/>
    <property type="chains" value="h=1-120"/>
</dbReference>
<dbReference type="PDB" id="7AQC">
    <property type="method" value="EM"/>
    <property type="resolution" value="2.99 A"/>
    <property type="chains" value="O=1-120"/>
</dbReference>
<dbReference type="PDB" id="7AQD">
    <property type="method" value="EM"/>
    <property type="resolution" value="3.10 A"/>
    <property type="chains" value="O=1-120"/>
</dbReference>
<dbReference type="PDB" id="7AS8">
    <property type="method" value="EM"/>
    <property type="resolution" value="2.90 A"/>
    <property type="chains" value="S=1-120"/>
</dbReference>
<dbReference type="PDB" id="7AS9">
    <property type="method" value="EM"/>
    <property type="resolution" value="3.50 A"/>
    <property type="chains" value="S=1-120"/>
</dbReference>
<dbReference type="PDB" id="7O5B">
    <property type="method" value="EM"/>
    <property type="resolution" value="3.33 A"/>
    <property type="chains" value="l=1-120"/>
</dbReference>
<dbReference type="PDB" id="7OPE">
    <property type="method" value="EM"/>
    <property type="resolution" value="3.20 A"/>
    <property type="chains" value="S=1-120"/>
</dbReference>
<dbReference type="PDB" id="7QGU">
    <property type="method" value="EM"/>
    <property type="resolution" value="4.75 A"/>
    <property type="chains" value="O=1-120"/>
</dbReference>
<dbReference type="PDB" id="7QH4">
    <property type="method" value="EM"/>
    <property type="resolution" value="5.45 A"/>
    <property type="chains" value="O=1-120"/>
</dbReference>
<dbReference type="PDB" id="7QV1">
    <property type="method" value="EM"/>
    <property type="resolution" value="3.50 A"/>
    <property type="chains" value="O=1-120"/>
</dbReference>
<dbReference type="PDB" id="7QV2">
    <property type="method" value="EM"/>
    <property type="resolution" value="3.50 A"/>
    <property type="chains" value="O=1-120"/>
</dbReference>
<dbReference type="PDB" id="7QV3">
    <property type="method" value="EM"/>
    <property type="resolution" value="5.14 A"/>
    <property type="chains" value="O=1-120"/>
</dbReference>
<dbReference type="PDB" id="8BUU">
    <property type="method" value="EM"/>
    <property type="resolution" value="2.90 A"/>
    <property type="chains" value="O=1-120"/>
</dbReference>
<dbReference type="PDB" id="8QCQ">
    <property type="method" value="EM"/>
    <property type="resolution" value="2.30 A"/>
    <property type="chains" value="O=1-120"/>
</dbReference>
<dbReference type="PDB" id="8QPP">
    <property type="method" value="EM"/>
    <property type="resolution" value="3.40 A"/>
    <property type="chains" value="l=1-120"/>
</dbReference>
<dbReference type="PDB" id="8R55">
    <property type="method" value="EM"/>
    <property type="resolution" value="3.57 A"/>
    <property type="chains" value="l=1-120"/>
</dbReference>
<dbReference type="PDB" id="8S1P">
    <property type="method" value="EM"/>
    <property type="resolution" value="1.96 A"/>
    <property type="chains" value="O=1-120"/>
</dbReference>
<dbReference type="PDB" id="8S1U">
    <property type="method" value="EM"/>
    <property type="resolution" value="3.40 A"/>
    <property type="chains" value="O=1-120"/>
</dbReference>
<dbReference type="PDB" id="9BS0">
    <property type="method" value="EM"/>
    <property type="resolution" value="3.30 A"/>
    <property type="chains" value="V=1-120"/>
</dbReference>
<dbReference type="PDBsum" id="3J3V"/>
<dbReference type="PDBsum" id="3J9W"/>
<dbReference type="PDBsum" id="5NJT"/>
<dbReference type="PDBsum" id="6HA1"/>
<dbReference type="PDBsum" id="6HA8"/>
<dbReference type="PDBsum" id="6HTQ"/>
<dbReference type="PDBsum" id="6PPF"/>
<dbReference type="PDBsum" id="6PPK"/>
<dbReference type="PDBsum" id="6TNN"/>
<dbReference type="PDBsum" id="6TPQ"/>
<dbReference type="PDBsum" id="7AQC"/>
<dbReference type="PDBsum" id="7AQD"/>
<dbReference type="PDBsum" id="7AS8"/>
<dbReference type="PDBsum" id="7AS9"/>
<dbReference type="PDBsum" id="7O5B"/>
<dbReference type="PDBsum" id="7OPE"/>
<dbReference type="PDBsum" id="7QGU"/>
<dbReference type="PDBsum" id="7QH4"/>
<dbReference type="PDBsum" id="7QV1"/>
<dbReference type="PDBsum" id="7QV2"/>
<dbReference type="PDBsum" id="7QV3"/>
<dbReference type="PDBsum" id="8BUU"/>
<dbReference type="PDBsum" id="8QCQ"/>
<dbReference type="PDBsum" id="8QPP"/>
<dbReference type="PDBsum" id="8R55"/>
<dbReference type="PDBsum" id="8S1P"/>
<dbReference type="PDBsum" id="8S1U"/>
<dbReference type="PDBsum" id="9BS0"/>
<dbReference type="EMDB" id="EMD-0176"/>
<dbReference type="EMDB" id="EMD-0177"/>
<dbReference type="EMDB" id="EMD-0270"/>
<dbReference type="EMDB" id="EMD-10535"/>
<dbReference type="EMDB" id="EMD-10543"/>
<dbReference type="EMDB" id="EMD-11862"/>
<dbReference type="EMDB" id="EMD-11864"/>
<dbReference type="EMDB" id="EMD-11889"/>
<dbReference type="EMDB" id="EMD-11890"/>
<dbReference type="EMDB" id="EMD-12734"/>
<dbReference type="EMDB" id="EMD-13017"/>
<dbReference type="EMDB" id="EMD-14157"/>
<dbReference type="EMDB" id="EMD-14158"/>
<dbReference type="EMDB" id="EMD-14159"/>
<dbReference type="EMDB" id="EMD-16246"/>
<dbReference type="EMDB" id="EMD-18332"/>
<dbReference type="EMDB" id="EMD-19638"/>
<dbReference type="EMDB" id="EMD-19641"/>
<dbReference type="EMDB" id="EMD-3656"/>
<dbReference type="EMDB" id="EMD-44849"/>
<dbReference type="SMR" id="P46899"/>
<dbReference type="FunCoup" id="P46899">
    <property type="interactions" value="574"/>
</dbReference>
<dbReference type="IntAct" id="P46899">
    <property type="interactions" value="1"/>
</dbReference>
<dbReference type="STRING" id="224308.BSU01320"/>
<dbReference type="jPOST" id="P46899"/>
<dbReference type="PaxDb" id="224308-BSU01320"/>
<dbReference type="EnsemblBacteria" id="CAB11908">
    <property type="protein sequence ID" value="CAB11908"/>
    <property type="gene ID" value="BSU_01320"/>
</dbReference>
<dbReference type="GeneID" id="86875470"/>
<dbReference type="GeneID" id="936785"/>
<dbReference type="KEGG" id="bsu:BSU01320"/>
<dbReference type="PATRIC" id="fig|224308.179.peg.135"/>
<dbReference type="eggNOG" id="COG0256">
    <property type="taxonomic scope" value="Bacteria"/>
</dbReference>
<dbReference type="InParanoid" id="P46899"/>
<dbReference type="OrthoDB" id="9810939at2"/>
<dbReference type="PhylomeDB" id="P46899"/>
<dbReference type="BioCyc" id="BSUB:BSU01320-MONOMER"/>
<dbReference type="SABIO-RK" id="P46899"/>
<dbReference type="EvolutionaryTrace" id="P46899"/>
<dbReference type="Proteomes" id="UP000001570">
    <property type="component" value="Chromosome"/>
</dbReference>
<dbReference type="GO" id="GO:0022625">
    <property type="term" value="C:cytosolic large ribosomal subunit"/>
    <property type="evidence" value="ECO:0000318"/>
    <property type="project" value="GO_Central"/>
</dbReference>
<dbReference type="GO" id="GO:0008097">
    <property type="term" value="F:5S rRNA binding"/>
    <property type="evidence" value="ECO:0000318"/>
    <property type="project" value="GO_Central"/>
</dbReference>
<dbReference type="GO" id="GO:0003735">
    <property type="term" value="F:structural constituent of ribosome"/>
    <property type="evidence" value="ECO:0007669"/>
    <property type="project" value="InterPro"/>
</dbReference>
<dbReference type="GO" id="GO:0006364">
    <property type="term" value="P:rRNA processing"/>
    <property type="evidence" value="ECO:0007669"/>
    <property type="project" value="UniProtKB-KW"/>
</dbReference>
<dbReference type="GO" id="GO:0006412">
    <property type="term" value="P:translation"/>
    <property type="evidence" value="ECO:0007669"/>
    <property type="project" value="UniProtKB-UniRule"/>
</dbReference>
<dbReference type="CDD" id="cd00432">
    <property type="entry name" value="Ribosomal_L18_L5e"/>
    <property type="match status" value="1"/>
</dbReference>
<dbReference type="FunFam" id="3.30.420.100:FF:000001">
    <property type="entry name" value="50S ribosomal protein L18"/>
    <property type="match status" value="1"/>
</dbReference>
<dbReference type="Gene3D" id="3.30.420.100">
    <property type="match status" value="1"/>
</dbReference>
<dbReference type="HAMAP" id="MF_01337_B">
    <property type="entry name" value="Ribosomal_uL18_B"/>
    <property type="match status" value="1"/>
</dbReference>
<dbReference type="InterPro" id="IPR004389">
    <property type="entry name" value="Ribosomal_uL18_bac-type"/>
</dbReference>
<dbReference type="InterPro" id="IPR005484">
    <property type="entry name" value="Ribosomal_uL18_bac/euk"/>
</dbReference>
<dbReference type="NCBIfam" id="TIGR00060">
    <property type="entry name" value="L18_bact"/>
    <property type="match status" value="1"/>
</dbReference>
<dbReference type="PANTHER" id="PTHR12899">
    <property type="entry name" value="39S RIBOSOMAL PROTEIN L18, MITOCHONDRIAL"/>
    <property type="match status" value="1"/>
</dbReference>
<dbReference type="PANTHER" id="PTHR12899:SF3">
    <property type="entry name" value="LARGE RIBOSOMAL SUBUNIT PROTEIN UL18M"/>
    <property type="match status" value="1"/>
</dbReference>
<dbReference type="Pfam" id="PF00861">
    <property type="entry name" value="Ribosomal_L18p"/>
    <property type="match status" value="1"/>
</dbReference>
<dbReference type="SUPFAM" id="SSF53137">
    <property type="entry name" value="Translational machinery components"/>
    <property type="match status" value="1"/>
</dbReference>
<keyword id="KW-0002">3D-structure</keyword>
<keyword id="KW-0143">Chaperone</keyword>
<keyword id="KW-1185">Reference proteome</keyword>
<keyword id="KW-0687">Ribonucleoprotein</keyword>
<keyword id="KW-0689">Ribosomal protein</keyword>
<keyword id="KW-0694">RNA-binding</keyword>
<keyword id="KW-0698">rRNA processing</keyword>
<keyword id="KW-0699">rRNA-binding</keyword>
<organism>
    <name type="scientific">Bacillus subtilis (strain 168)</name>
    <dbReference type="NCBI Taxonomy" id="224308"/>
    <lineage>
        <taxon>Bacteria</taxon>
        <taxon>Bacillati</taxon>
        <taxon>Bacillota</taxon>
        <taxon>Bacilli</taxon>
        <taxon>Bacillales</taxon>
        <taxon>Bacillaceae</taxon>
        <taxon>Bacillus</taxon>
    </lineage>
</organism>
<comment type="function">
    <text evidence="1">This is one of the proteins that bind and probably mediate the attachment of the 5S RNA into the large ribosomal subunit, where it forms part of the central protuberance.</text>
</comment>
<comment type="function">
    <text evidence="3">Required for correct processing of both the 5' and 3' ends of 5S rRNA precursor, which is does in conjunction with ribonuclease M5 (RNase M5, rnmV). Possibly folds the 5S rRNA precursor into the correct conformation, thus acting as a chaperone.</text>
</comment>
<comment type="subunit">
    <text evidence="2 3 5">Part of the 50S ribosomal subunit (PubMed:30126986). Part of the 5S rRNA/L5/L18/L25 subcomplex (Probable). Contacts the 23S rRNA and 5S rRNA (Probable). Required for catalysis of RNase M5 (PubMed:6432797).</text>
</comment>
<comment type="similarity">
    <text evidence="1">Belongs to the universal ribosomal protein uL18 family.</text>
</comment>
<name>RL18_BACSU</name>
<evidence type="ECO:0000255" key="1">
    <source>
        <dbReference type="HAMAP-Rule" id="MF_01337"/>
    </source>
</evidence>
<evidence type="ECO:0000269" key="2">
    <source>
    </source>
</evidence>
<evidence type="ECO:0000269" key="3">
    <source>
    </source>
</evidence>
<evidence type="ECO:0000305" key="4"/>
<evidence type="ECO:0000305" key="5">
    <source>
    </source>
</evidence>
<evidence type="ECO:0007744" key="6">
    <source>
        <dbReference type="PDB" id="6HA1"/>
    </source>
</evidence>
<evidence type="ECO:0007744" key="7">
    <source>
        <dbReference type="PDB" id="6HA8"/>
    </source>
</evidence>
<evidence type="ECO:0007829" key="8">
    <source>
        <dbReference type="PDB" id="7AS8"/>
    </source>
</evidence>
<evidence type="ECO:0007829" key="9">
    <source>
        <dbReference type="PDB" id="7AS9"/>
    </source>
</evidence>
<evidence type="ECO:0007829" key="10">
    <source>
        <dbReference type="PDB" id="8S1P"/>
    </source>
</evidence>
<feature type="chain" id="PRO_0000131216" description="Large ribosomal subunit protein uL18">
    <location>
        <begin position="1"/>
        <end position="120"/>
    </location>
</feature>
<feature type="sequence conflict" description="In Ref. 2; BAA10982." evidence="4" ref="2">
    <original>N</original>
    <variation>Y</variation>
    <location>
        <position position="37"/>
    </location>
</feature>
<feature type="helix" evidence="10">
    <location>
        <begin position="7"/>
        <end position="21"/>
    </location>
</feature>
<feature type="strand" evidence="10">
    <location>
        <begin position="26"/>
        <end position="28"/>
    </location>
</feature>
<feature type="strand" evidence="10">
    <location>
        <begin position="30"/>
        <end position="35"/>
    </location>
</feature>
<feature type="strand" evidence="10">
    <location>
        <begin position="40"/>
        <end position="46"/>
    </location>
</feature>
<feature type="turn" evidence="10">
    <location>
        <begin position="47"/>
        <end position="50"/>
    </location>
</feature>
<feature type="strand" evidence="10">
    <location>
        <begin position="51"/>
        <end position="57"/>
    </location>
</feature>
<feature type="strand" evidence="10">
    <location>
        <begin position="60"/>
        <end position="63"/>
    </location>
</feature>
<feature type="strand" evidence="8">
    <location>
        <begin position="68"/>
        <end position="70"/>
    </location>
</feature>
<feature type="helix" evidence="10">
    <location>
        <begin position="71"/>
        <end position="88"/>
    </location>
</feature>
<feature type="strand" evidence="10">
    <location>
        <begin position="94"/>
        <end position="96"/>
    </location>
</feature>
<feature type="strand" evidence="9">
    <location>
        <begin position="98"/>
        <end position="100"/>
    </location>
</feature>
<feature type="strand" evidence="8">
    <location>
        <begin position="102"/>
        <end position="104"/>
    </location>
</feature>
<feature type="helix" evidence="10">
    <location>
        <begin position="105"/>
        <end position="115"/>
    </location>
</feature>